<comment type="function">
    <text evidence="2">Negative regulator of the ER-associated degradation pathway (ERAD) of misfolded proteins. It competes with AMFR/gp78 for binding VCP/p97, and inhibits AMFR/gp78-VCP/p97 complex formation that is required for degradation of ERAD substrates. Involved in the regulation of adrenal cortisol and dehydroepiandrosterone (DHEA) biosynthesis.</text>
</comment>
<comment type="subunit">
    <text evidence="2">Interacts (via VIM motif) with VCP/p97. Forms a complex with VCP/p97 and DERL1.</text>
</comment>
<comment type="subcellular location">
    <subcellularLocation>
        <location evidence="2">Membrane</location>
        <topology evidence="2">Lipid-anchor</topology>
    </subcellularLocation>
    <subcellularLocation>
        <location evidence="1">Smooth endoplasmic reticulum membrane</location>
        <topology evidence="1">Peripheral membrane protein</topology>
    </subcellularLocation>
    <subcellularLocation>
        <location evidence="1">Golgi apparatus membrane</location>
        <topology evidence="1">Peripheral membrane protein</topology>
    </subcellularLocation>
    <subcellularLocation>
        <location evidence="1">Cell membrane</location>
        <topology evidence="1">Peripheral membrane protein</topology>
    </subcellularLocation>
    <subcellularLocation>
        <location evidence="2">Lysosome membrane</location>
    </subcellularLocation>
</comment>
<comment type="similarity">
    <text evidence="4">Belongs to the SVIP family.</text>
</comment>
<proteinExistence type="inferred from homology"/>
<reference key="1">
    <citation type="submission" date="2004-11" db="EMBL/GenBank/DDBJ databases">
        <authorList>
            <consortium name="The German cDNA consortium"/>
        </authorList>
    </citation>
    <scope>NUCLEOTIDE SEQUENCE [LARGE SCALE MRNA]</scope>
    <source>
        <tissue>Brain cortex</tissue>
    </source>
</reference>
<accession>Q5R6N0</accession>
<sequence length="77" mass="8443">MGLCFPCPGESAPPTPDLEEKRAKLAEAAERRQKEAASRGILDVQSVQEKRKKKEKIEKQIATSGPPPEGGLRWTVS</sequence>
<name>SVIP_PONAB</name>
<protein>
    <recommendedName>
        <fullName>Small VCP/p97-interacting protein</fullName>
    </recommendedName>
</protein>
<evidence type="ECO:0000250" key="1">
    <source>
        <dbReference type="UniProtKB" id="P0C0A9"/>
    </source>
</evidence>
<evidence type="ECO:0000250" key="2">
    <source>
        <dbReference type="UniProtKB" id="Q8NHG7"/>
    </source>
</evidence>
<evidence type="ECO:0000256" key="3">
    <source>
        <dbReference type="SAM" id="MobiDB-lite"/>
    </source>
</evidence>
<evidence type="ECO:0000305" key="4"/>
<organism>
    <name type="scientific">Pongo abelii</name>
    <name type="common">Sumatran orangutan</name>
    <name type="synonym">Pongo pygmaeus abelii</name>
    <dbReference type="NCBI Taxonomy" id="9601"/>
    <lineage>
        <taxon>Eukaryota</taxon>
        <taxon>Metazoa</taxon>
        <taxon>Chordata</taxon>
        <taxon>Craniata</taxon>
        <taxon>Vertebrata</taxon>
        <taxon>Euteleostomi</taxon>
        <taxon>Mammalia</taxon>
        <taxon>Eutheria</taxon>
        <taxon>Euarchontoglires</taxon>
        <taxon>Primates</taxon>
        <taxon>Haplorrhini</taxon>
        <taxon>Catarrhini</taxon>
        <taxon>Hominidae</taxon>
        <taxon>Pongo</taxon>
    </lineage>
</organism>
<keyword id="KW-1003">Cell membrane</keyword>
<keyword id="KW-0256">Endoplasmic reticulum</keyword>
<keyword id="KW-0333">Golgi apparatus</keyword>
<keyword id="KW-0449">Lipoprotein</keyword>
<keyword id="KW-0458">Lysosome</keyword>
<keyword id="KW-0472">Membrane</keyword>
<keyword id="KW-0519">Myristate</keyword>
<keyword id="KW-0564">Palmitate</keyword>
<keyword id="KW-0597">Phosphoprotein</keyword>
<keyword id="KW-1185">Reference proteome</keyword>
<dbReference type="EMBL" id="CR860457">
    <property type="protein sequence ID" value="CAH92580.1"/>
    <property type="molecule type" value="mRNA"/>
</dbReference>
<dbReference type="RefSeq" id="NP_001126513.1">
    <property type="nucleotide sequence ID" value="NM_001133041.1"/>
</dbReference>
<dbReference type="BMRB" id="Q5R6N0"/>
<dbReference type="SMR" id="Q5R6N0"/>
<dbReference type="FunCoup" id="Q5R6N0">
    <property type="interactions" value="356"/>
</dbReference>
<dbReference type="STRING" id="9601.ENSPPYP00000003920"/>
<dbReference type="Ensembl" id="ENSPPYT00000059007.1">
    <property type="protein sequence ID" value="ENSPPYP00000026543.1"/>
    <property type="gene ID" value="ENSPPYG00000031372.1"/>
</dbReference>
<dbReference type="GeneID" id="100173501"/>
<dbReference type="KEGG" id="pon:100173501"/>
<dbReference type="CTD" id="258010"/>
<dbReference type="eggNOG" id="ENOG502S5MU">
    <property type="taxonomic scope" value="Eukaryota"/>
</dbReference>
<dbReference type="GeneTree" id="ENSGT00390000007067"/>
<dbReference type="HOGENOM" id="CLU_174267_1_0_1"/>
<dbReference type="InParanoid" id="Q5R6N0"/>
<dbReference type="OMA" id="GMCLPCF"/>
<dbReference type="Proteomes" id="UP000001595">
    <property type="component" value="Chromosome 11"/>
</dbReference>
<dbReference type="GO" id="GO:0000139">
    <property type="term" value="C:Golgi membrane"/>
    <property type="evidence" value="ECO:0007669"/>
    <property type="project" value="UniProtKB-SubCell"/>
</dbReference>
<dbReference type="GO" id="GO:0005765">
    <property type="term" value="C:lysosomal membrane"/>
    <property type="evidence" value="ECO:0007669"/>
    <property type="project" value="UniProtKB-SubCell"/>
</dbReference>
<dbReference type="GO" id="GO:0005886">
    <property type="term" value="C:plasma membrane"/>
    <property type="evidence" value="ECO:0007669"/>
    <property type="project" value="UniProtKB-SubCell"/>
</dbReference>
<dbReference type="GO" id="GO:0030868">
    <property type="term" value="C:smooth endoplasmic reticulum membrane"/>
    <property type="evidence" value="ECO:0007669"/>
    <property type="project" value="UniProtKB-SubCell"/>
</dbReference>
<dbReference type="GO" id="GO:0051117">
    <property type="term" value="F:ATPase binding"/>
    <property type="evidence" value="ECO:0007669"/>
    <property type="project" value="Ensembl"/>
</dbReference>
<dbReference type="GO" id="GO:1904293">
    <property type="term" value="P:negative regulation of ERAD pathway"/>
    <property type="evidence" value="ECO:0007669"/>
    <property type="project" value="Ensembl"/>
</dbReference>
<dbReference type="GO" id="GO:1904153">
    <property type="term" value="P:negative regulation of retrograde protein transport, ER to cytosol"/>
    <property type="evidence" value="ECO:0007669"/>
    <property type="project" value="Ensembl"/>
</dbReference>
<dbReference type="GO" id="GO:1904240">
    <property type="term" value="P:negative regulation of VCP-NPL4-UFD1 AAA ATPase complex assembly"/>
    <property type="evidence" value="ECO:0007669"/>
    <property type="project" value="TreeGrafter"/>
</dbReference>
<dbReference type="GO" id="GO:0010508">
    <property type="term" value="P:positive regulation of autophagy"/>
    <property type="evidence" value="ECO:0007669"/>
    <property type="project" value="Ensembl"/>
</dbReference>
<dbReference type="InterPro" id="IPR031632">
    <property type="entry name" value="SVIP"/>
</dbReference>
<dbReference type="InterPro" id="IPR055366">
    <property type="entry name" value="SVIP_metazoa"/>
</dbReference>
<dbReference type="PANTHER" id="PTHR35269">
    <property type="entry name" value="SMALL VCP/P97-INTERACTING PROTEIN"/>
    <property type="match status" value="1"/>
</dbReference>
<dbReference type="PANTHER" id="PTHR35269:SF1">
    <property type="entry name" value="SMALL VCP_P97-INTERACTING PROTEIN"/>
    <property type="match status" value="1"/>
</dbReference>
<dbReference type="Pfam" id="PF15811">
    <property type="entry name" value="SVIP"/>
    <property type="match status" value="1"/>
</dbReference>
<gene>
    <name type="primary">SVIP</name>
</gene>
<feature type="initiator methionine" description="Removed" evidence="2">
    <location>
        <position position="1"/>
    </location>
</feature>
<feature type="chain" id="PRO_0000072338" description="Small VCP/p97-interacting protein">
    <location>
        <begin position="2"/>
        <end position="77"/>
    </location>
</feature>
<feature type="region of interest" description="Disordered" evidence="3">
    <location>
        <begin position="1"/>
        <end position="20"/>
    </location>
</feature>
<feature type="region of interest" description="VCP/p97-interacting motif (VIM)" evidence="2">
    <location>
        <begin position="21"/>
        <end position="33"/>
    </location>
</feature>
<feature type="region of interest" description="Disordered" evidence="3">
    <location>
        <begin position="25"/>
        <end position="77"/>
    </location>
</feature>
<feature type="compositionally biased region" description="Basic and acidic residues" evidence="3">
    <location>
        <begin position="25"/>
        <end position="37"/>
    </location>
</feature>
<feature type="modified residue" description="Phosphoserine" evidence="2">
    <location>
        <position position="46"/>
    </location>
</feature>
<feature type="lipid moiety-binding region" description="N-myristoyl glycine" evidence="2">
    <location>
        <position position="2"/>
    </location>
</feature>
<feature type="lipid moiety-binding region" description="S-palmitoyl cysteine" evidence="2">
    <location>
        <position position="4"/>
    </location>
</feature>
<feature type="lipid moiety-binding region" description="S-palmitoyl cysteine" evidence="2">
    <location>
        <position position="7"/>
    </location>
</feature>